<gene>
    <name evidence="1" type="primary">gmk</name>
    <name type="ordered locus">CE1726</name>
</gene>
<evidence type="ECO:0000255" key="1">
    <source>
        <dbReference type="HAMAP-Rule" id="MF_00328"/>
    </source>
</evidence>
<protein>
    <recommendedName>
        <fullName evidence="1">Guanylate kinase</fullName>
        <ecNumber evidence="1">2.7.4.8</ecNumber>
    </recommendedName>
    <alternativeName>
        <fullName evidence="1">GMP kinase</fullName>
    </alternativeName>
</protein>
<accession>Q8FT45</accession>
<proteinExistence type="inferred from homology"/>
<reference key="1">
    <citation type="journal article" date="2003" name="Genome Res.">
        <title>Comparative complete genome sequence analysis of the amino acid replacements responsible for the thermostability of Corynebacterium efficiens.</title>
        <authorList>
            <person name="Nishio Y."/>
            <person name="Nakamura Y."/>
            <person name="Kawarabayasi Y."/>
            <person name="Usuda Y."/>
            <person name="Kimura E."/>
            <person name="Sugimoto S."/>
            <person name="Matsui K."/>
            <person name="Yamagishi A."/>
            <person name="Kikuchi H."/>
            <person name="Ikeo K."/>
            <person name="Gojobori T."/>
        </authorList>
    </citation>
    <scope>NUCLEOTIDE SEQUENCE [LARGE SCALE GENOMIC DNA]</scope>
    <source>
        <strain>DSM 44549 / YS-314 / AJ 12310 / JCM 11189 / NBRC 100395</strain>
    </source>
</reference>
<name>KGUA_COREF</name>
<dbReference type="EC" id="2.7.4.8" evidence="1"/>
<dbReference type="EMBL" id="BA000035">
    <property type="protein sequence ID" value="BAC18536.1"/>
    <property type="molecule type" value="Genomic_DNA"/>
</dbReference>
<dbReference type="RefSeq" id="WP_011075578.1">
    <property type="nucleotide sequence ID" value="NC_004369.1"/>
</dbReference>
<dbReference type="SMR" id="Q8FT45"/>
<dbReference type="STRING" id="196164.gene:10742147"/>
<dbReference type="KEGG" id="cef:CE1726"/>
<dbReference type="eggNOG" id="COG0194">
    <property type="taxonomic scope" value="Bacteria"/>
</dbReference>
<dbReference type="HOGENOM" id="CLU_001715_1_1_11"/>
<dbReference type="OrthoDB" id="9808150at2"/>
<dbReference type="Proteomes" id="UP000001409">
    <property type="component" value="Chromosome"/>
</dbReference>
<dbReference type="GO" id="GO:0005829">
    <property type="term" value="C:cytosol"/>
    <property type="evidence" value="ECO:0007669"/>
    <property type="project" value="TreeGrafter"/>
</dbReference>
<dbReference type="GO" id="GO:0005524">
    <property type="term" value="F:ATP binding"/>
    <property type="evidence" value="ECO:0007669"/>
    <property type="project" value="UniProtKB-UniRule"/>
</dbReference>
<dbReference type="GO" id="GO:0004385">
    <property type="term" value="F:guanylate kinase activity"/>
    <property type="evidence" value="ECO:0007669"/>
    <property type="project" value="UniProtKB-UniRule"/>
</dbReference>
<dbReference type="CDD" id="cd00071">
    <property type="entry name" value="GMPK"/>
    <property type="match status" value="1"/>
</dbReference>
<dbReference type="FunFam" id="3.30.63.10:FF:000002">
    <property type="entry name" value="Guanylate kinase 1"/>
    <property type="match status" value="1"/>
</dbReference>
<dbReference type="Gene3D" id="3.30.63.10">
    <property type="entry name" value="Guanylate Kinase phosphate binding domain"/>
    <property type="match status" value="1"/>
</dbReference>
<dbReference type="Gene3D" id="3.40.50.300">
    <property type="entry name" value="P-loop containing nucleotide triphosphate hydrolases"/>
    <property type="match status" value="1"/>
</dbReference>
<dbReference type="HAMAP" id="MF_00328">
    <property type="entry name" value="Guanylate_kinase"/>
    <property type="match status" value="1"/>
</dbReference>
<dbReference type="InterPro" id="IPR008145">
    <property type="entry name" value="GK/Ca_channel_bsu"/>
</dbReference>
<dbReference type="InterPro" id="IPR008144">
    <property type="entry name" value="Guanylate_kin-like_dom"/>
</dbReference>
<dbReference type="InterPro" id="IPR017665">
    <property type="entry name" value="Guanylate_kinase"/>
</dbReference>
<dbReference type="InterPro" id="IPR020590">
    <property type="entry name" value="Guanylate_kinase_CS"/>
</dbReference>
<dbReference type="InterPro" id="IPR027417">
    <property type="entry name" value="P-loop_NTPase"/>
</dbReference>
<dbReference type="NCBIfam" id="TIGR03263">
    <property type="entry name" value="guanyl_kin"/>
    <property type="match status" value="1"/>
</dbReference>
<dbReference type="PANTHER" id="PTHR23117:SF13">
    <property type="entry name" value="GUANYLATE KINASE"/>
    <property type="match status" value="1"/>
</dbReference>
<dbReference type="PANTHER" id="PTHR23117">
    <property type="entry name" value="GUANYLATE KINASE-RELATED"/>
    <property type="match status" value="1"/>
</dbReference>
<dbReference type="Pfam" id="PF00625">
    <property type="entry name" value="Guanylate_kin"/>
    <property type="match status" value="1"/>
</dbReference>
<dbReference type="SMART" id="SM00072">
    <property type="entry name" value="GuKc"/>
    <property type="match status" value="1"/>
</dbReference>
<dbReference type="SUPFAM" id="SSF52540">
    <property type="entry name" value="P-loop containing nucleoside triphosphate hydrolases"/>
    <property type="match status" value="1"/>
</dbReference>
<dbReference type="PROSITE" id="PS00856">
    <property type="entry name" value="GUANYLATE_KINASE_1"/>
    <property type="match status" value="1"/>
</dbReference>
<dbReference type="PROSITE" id="PS50052">
    <property type="entry name" value="GUANYLATE_KINASE_2"/>
    <property type="match status" value="1"/>
</dbReference>
<feature type="chain" id="PRO_0000170528" description="Guanylate kinase">
    <location>
        <begin position="1"/>
        <end position="190"/>
    </location>
</feature>
<feature type="domain" description="Guanylate kinase-like" evidence="1">
    <location>
        <begin position="8"/>
        <end position="188"/>
    </location>
</feature>
<feature type="binding site" evidence="1">
    <location>
        <begin position="15"/>
        <end position="22"/>
    </location>
    <ligand>
        <name>ATP</name>
        <dbReference type="ChEBI" id="CHEBI:30616"/>
    </ligand>
</feature>
<sequence>MSGDKPHGRLVILAGPSAVGKSTVVDRLRSDVPNLYFSVSMTTRDPRPGEVDGRDYFYVTAQEFQEKIDRGEMLEWADIHGGLQRSGTPAEPVRQAREEGRPVLVEVDLVGARNIARLIPEAETIFLAPPSWEVLVERLTGRGTESQDVINRRLETAREELAAQSEFKHVIINDDVDTAVSAIKAVLLGT</sequence>
<organism>
    <name type="scientific">Corynebacterium efficiens (strain DSM 44549 / YS-314 / AJ 12310 / JCM 11189 / NBRC 100395)</name>
    <dbReference type="NCBI Taxonomy" id="196164"/>
    <lineage>
        <taxon>Bacteria</taxon>
        <taxon>Bacillati</taxon>
        <taxon>Actinomycetota</taxon>
        <taxon>Actinomycetes</taxon>
        <taxon>Mycobacteriales</taxon>
        <taxon>Corynebacteriaceae</taxon>
        <taxon>Corynebacterium</taxon>
    </lineage>
</organism>
<comment type="function">
    <text evidence="1">Essential for recycling GMP and indirectly, cGMP.</text>
</comment>
<comment type="catalytic activity">
    <reaction evidence="1">
        <text>GMP + ATP = GDP + ADP</text>
        <dbReference type="Rhea" id="RHEA:20780"/>
        <dbReference type="ChEBI" id="CHEBI:30616"/>
        <dbReference type="ChEBI" id="CHEBI:58115"/>
        <dbReference type="ChEBI" id="CHEBI:58189"/>
        <dbReference type="ChEBI" id="CHEBI:456216"/>
        <dbReference type="EC" id="2.7.4.8"/>
    </reaction>
</comment>
<comment type="subcellular location">
    <subcellularLocation>
        <location evidence="1">Cytoplasm</location>
    </subcellularLocation>
</comment>
<comment type="similarity">
    <text evidence="1">Belongs to the guanylate kinase family.</text>
</comment>
<keyword id="KW-0067">ATP-binding</keyword>
<keyword id="KW-0963">Cytoplasm</keyword>
<keyword id="KW-0418">Kinase</keyword>
<keyword id="KW-0547">Nucleotide-binding</keyword>
<keyword id="KW-1185">Reference proteome</keyword>
<keyword id="KW-0808">Transferase</keyword>